<name>CODY_BACC4</name>
<reference key="1">
    <citation type="submission" date="2008-10" db="EMBL/GenBank/DDBJ databases">
        <title>Genome sequence of Bacillus cereus B4264.</title>
        <authorList>
            <person name="Dodson R.J."/>
            <person name="Durkin A.S."/>
            <person name="Rosovitz M.J."/>
            <person name="Rasko D.A."/>
            <person name="Hoffmaster A."/>
            <person name="Ravel J."/>
            <person name="Sutton G."/>
        </authorList>
    </citation>
    <scope>NUCLEOTIDE SEQUENCE [LARGE SCALE GENOMIC DNA]</scope>
    <source>
        <strain>B4264</strain>
    </source>
</reference>
<proteinExistence type="inferred from homology"/>
<evidence type="ECO:0000255" key="1">
    <source>
        <dbReference type="HAMAP-Rule" id="MF_00621"/>
    </source>
</evidence>
<sequence>MELLAKTRKLNALLQSAAGKPVNFREMSDTMCEVIEANVFVVSRRGKLLGYAIHQQIENERMKQMLAERQFPEEYTQSLFNITETSSNLDVNSAYTAFPVENRELFGQGLTTIVPIVGGGERLGTLVLARLGQEFLDDDLILAEYSSTVVGMEILREKAEEIEEEARSKAVVQMAISSLSYSELEAIEHIFEELNGTEGLLVASKIADRVGITRSVIVNALRKLESAGVIESRSLGMKGTYIKVLNDKFLQELAKLKTN</sequence>
<accession>B7HDV1</accession>
<organism>
    <name type="scientific">Bacillus cereus (strain B4264)</name>
    <dbReference type="NCBI Taxonomy" id="405532"/>
    <lineage>
        <taxon>Bacteria</taxon>
        <taxon>Bacillati</taxon>
        <taxon>Bacillota</taxon>
        <taxon>Bacilli</taxon>
        <taxon>Bacillales</taxon>
        <taxon>Bacillaceae</taxon>
        <taxon>Bacillus</taxon>
        <taxon>Bacillus cereus group</taxon>
    </lineage>
</organism>
<dbReference type="EMBL" id="CP001176">
    <property type="protein sequence ID" value="ACK59403.1"/>
    <property type="molecule type" value="Genomic_DNA"/>
</dbReference>
<dbReference type="RefSeq" id="WP_000421290.1">
    <property type="nucleotide sequence ID" value="NZ_VEHB01000002.1"/>
</dbReference>
<dbReference type="SMR" id="B7HDV1"/>
<dbReference type="GeneID" id="93007284"/>
<dbReference type="KEGG" id="bcb:BCB4264_A3926"/>
<dbReference type="HOGENOM" id="CLU_089581_0_0_9"/>
<dbReference type="Proteomes" id="UP000007096">
    <property type="component" value="Chromosome"/>
</dbReference>
<dbReference type="GO" id="GO:0005737">
    <property type="term" value="C:cytoplasm"/>
    <property type="evidence" value="ECO:0007669"/>
    <property type="project" value="UniProtKB-SubCell"/>
</dbReference>
<dbReference type="GO" id="GO:0003677">
    <property type="term" value="F:DNA binding"/>
    <property type="evidence" value="ECO:0007669"/>
    <property type="project" value="UniProtKB-UniRule"/>
</dbReference>
<dbReference type="GO" id="GO:0003700">
    <property type="term" value="F:DNA-binding transcription factor activity"/>
    <property type="evidence" value="ECO:0007669"/>
    <property type="project" value="InterPro"/>
</dbReference>
<dbReference type="GO" id="GO:0005525">
    <property type="term" value="F:GTP binding"/>
    <property type="evidence" value="ECO:0007669"/>
    <property type="project" value="InterPro"/>
</dbReference>
<dbReference type="GO" id="GO:0045892">
    <property type="term" value="P:negative regulation of DNA-templated transcription"/>
    <property type="evidence" value="ECO:0007669"/>
    <property type="project" value="UniProtKB-UniRule"/>
</dbReference>
<dbReference type="FunFam" id="1.10.10.10:FF:000034">
    <property type="entry name" value="GTP-sensing transcriptional pleiotropic repressor CodY"/>
    <property type="match status" value="1"/>
</dbReference>
<dbReference type="FunFam" id="3.30.450.40:FF:000003">
    <property type="entry name" value="GTP-sensing transcriptional pleiotropic repressor CodY"/>
    <property type="match status" value="1"/>
</dbReference>
<dbReference type="Gene3D" id="3.30.450.40">
    <property type="match status" value="1"/>
</dbReference>
<dbReference type="Gene3D" id="1.10.10.10">
    <property type="entry name" value="Winged helix-like DNA-binding domain superfamily/Winged helix DNA-binding domain"/>
    <property type="match status" value="1"/>
</dbReference>
<dbReference type="HAMAP" id="MF_00621">
    <property type="entry name" value="HTH_type_CodY"/>
    <property type="match status" value="1"/>
</dbReference>
<dbReference type="InterPro" id="IPR014154">
    <property type="entry name" value="CodY"/>
</dbReference>
<dbReference type="InterPro" id="IPR029016">
    <property type="entry name" value="GAF-like_dom_sf"/>
</dbReference>
<dbReference type="InterPro" id="IPR013198">
    <property type="entry name" value="GTP_trans_reg_CodY_C"/>
</dbReference>
<dbReference type="InterPro" id="IPR010312">
    <property type="entry name" value="Transc_reg_CodY_N"/>
</dbReference>
<dbReference type="InterPro" id="IPR036388">
    <property type="entry name" value="WH-like_DNA-bd_sf"/>
</dbReference>
<dbReference type="InterPro" id="IPR036390">
    <property type="entry name" value="WH_DNA-bd_sf"/>
</dbReference>
<dbReference type="NCBIfam" id="TIGR02787">
    <property type="entry name" value="codY_Gpos"/>
    <property type="match status" value="1"/>
</dbReference>
<dbReference type="NCBIfam" id="NF003170">
    <property type="entry name" value="PRK04158.1"/>
    <property type="match status" value="1"/>
</dbReference>
<dbReference type="PANTHER" id="PTHR40062:SF1">
    <property type="entry name" value="GLOBAL TRANSCRIPTIONAL REGULATOR CODY"/>
    <property type="match status" value="1"/>
</dbReference>
<dbReference type="PANTHER" id="PTHR40062">
    <property type="entry name" value="GTP-SENSING TRANSCRIPTIONAL PLEIOTROPIC REPRESSOR CODY"/>
    <property type="match status" value="1"/>
</dbReference>
<dbReference type="Pfam" id="PF06018">
    <property type="entry name" value="CodY"/>
    <property type="match status" value="1"/>
</dbReference>
<dbReference type="Pfam" id="PF08222">
    <property type="entry name" value="HTH_CodY"/>
    <property type="match status" value="1"/>
</dbReference>
<dbReference type="PIRSF" id="PIRSF011572">
    <property type="entry name" value="GTP_sensing_CodY"/>
    <property type="match status" value="1"/>
</dbReference>
<dbReference type="SUPFAM" id="SSF46785">
    <property type="entry name" value="Winged helix' DNA-binding domain"/>
    <property type="match status" value="1"/>
</dbReference>
<comment type="function">
    <text evidence="1">DNA-binding global transcriptional regulator which is involved in the adaptive response to starvation and acts by directly or indirectly controlling the expression of numerous genes in response to nutrient availability. During rapid exponential growth, CodY is highly active and represses genes whose products allow adaptation to nutrient depletion.</text>
</comment>
<comment type="subcellular location">
    <subcellularLocation>
        <location evidence="1">Cytoplasm</location>
    </subcellularLocation>
</comment>
<comment type="similarity">
    <text evidence="1">Belongs to the CodY family.</text>
</comment>
<protein>
    <recommendedName>
        <fullName evidence="1">Global transcriptional regulator CodY</fullName>
    </recommendedName>
</protein>
<gene>
    <name evidence="1" type="primary">codY</name>
    <name type="ordered locus">BCB4264_A3926</name>
</gene>
<keyword id="KW-0963">Cytoplasm</keyword>
<keyword id="KW-0238">DNA-binding</keyword>
<keyword id="KW-0597">Phosphoprotein</keyword>
<keyword id="KW-0678">Repressor</keyword>
<keyword id="KW-0804">Transcription</keyword>
<keyword id="KW-0805">Transcription regulation</keyword>
<feature type="chain" id="PRO_1000130448" description="Global transcriptional regulator CodY">
    <location>
        <begin position="1"/>
        <end position="259"/>
    </location>
</feature>
<feature type="DNA-binding region" description="H-T-H motif" evidence="1">
    <location>
        <begin position="203"/>
        <end position="222"/>
    </location>
</feature>
<feature type="region of interest" description="GAF domain" evidence="1">
    <location>
        <begin position="1"/>
        <end position="155"/>
    </location>
</feature>
<feature type="modified residue" description="Phosphoserine" evidence="1">
    <location>
        <position position="215"/>
    </location>
</feature>